<reference key="1">
    <citation type="submission" date="2002-12" db="EMBL/GenBank/DDBJ databases">
        <title>Complete genome sequence of Vibrio vulnificus CMCP6.</title>
        <authorList>
            <person name="Rhee J.H."/>
            <person name="Kim S.Y."/>
            <person name="Chung S.S."/>
            <person name="Kim J.J."/>
            <person name="Moon Y.H."/>
            <person name="Jeong H."/>
            <person name="Choy H.E."/>
        </authorList>
    </citation>
    <scope>NUCLEOTIDE SEQUENCE [LARGE SCALE GENOMIC DNA]</scope>
    <source>
        <strain>CMCP6</strain>
    </source>
</reference>
<name>EFTU2_VIBVU</name>
<gene>
    <name evidence="2" type="primary">tuf2</name>
    <name type="ordered locus">VV1_1339</name>
</gene>
<evidence type="ECO:0000250" key="1"/>
<evidence type="ECO:0000255" key="2">
    <source>
        <dbReference type="HAMAP-Rule" id="MF_00118"/>
    </source>
</evidence>
<keyword id="KW-0963">Cytoplasm</keyword>
<keyword id="KW-0251">Elongation factor</keyword>
<keyword id="KW-0342">GTP-binding</keyword>
<keyword id="KW-0378">Hydrolase</keyword>
<keyword id="KW-0460">Magnesium</keyword>
<keyword id="KW-0479">Metal-binding</keyword>
<keyword id="KW-0547">Nucleotide-binding</keyword>
<keyword id="KW-0648">Protein biosynthesis</keyword>
<protein>
    <recommendedName>
        <fullName evidence="2">Elongation factor Tu 2</fullName>
        <shortName evidence="2">EF-Tu 2</shortName>
        <ecNumber evidence="2">3.6.5.3</ecNumber>
    </recommendedName>
</protein>
<feature type="chain" id="PRO_0000091434" description="Elongation factor Tu 2">
    <location>
        <begin position="1"/>
        <end position="394"/>
    </location>
</feature>
<feature type="domain" description="tr-type G">
    <location>
        <begin position="10"/>
        <end position="204"/>
    </location>
</feature>
<feature type="region of interest" description="G1" evidence="1">
    <location>
        <begin position="19"/>
        <end position="26"/>
    </location>
</feature>
<feature type="region of interest" description="G2" evidence="1">
    <location>
        <begin position="60"/>
        <end position="64"/>
    </location>
</feature>
<feature type="region of interest" description="G3" evidence="1">
    <location>
        <begin position="81"/>
        <end position="84"/>
    </location>
</feature>
<feature type="region of interest" description="G4" evidence="1">
    <location>
        <begin position="136"/>
        <end position="139"/>
    </location>
</feature>
<feature type="region of interest" description="G5" evidence="1">
    <location>
        <begin position="174"/>
        <end position="176"/>
    </location>
</feature>
<feature type="binding site" evidence="2">
    <location>
        <begin position="19"/>
        <end position="26"/>
    </location>
    <ligand>
        <name>GTP</name>
        <dbReference type="ChEBI" id="CHEBI:37565"/>
    </ligand>
</feature>
<feature type="binding site" evidence="2">
    <location>
        <position position="26"/>
    </location>
    <ligand>
        <name>Mg(2+)</name>
        <dbReference type="ChEBI" id="CHEBI:18420"/>
    </ligand>
</feature>
<feature type="binding site" evidence="2">
    <location>
        <begin position="81"/>
        <end position="85"/>
    </location>
    <ligand>
        <name>GTP</name>
        <dbReference type="ChEBI" id="CHEBI:37565"/>
    </ligand>
</feature>
<feature type="binding site" evidence="2">
    <location>
        <begin position="136"/>
        <end position="139"/>
    </location>
    <ligand>
        <name>GTP</name>
        <dbReference type="ChEBI" id="CHEBI:37565"/>
    </ligand>
</feature>
<organism>
    <name type="scientific">Vibrio vulnificus (strain CMCP6)</name>
    <dbReference type="NCBI Taxonomy" id="216895"/>
    <lineage>
        <taxon>Bacteria</taxon>
        <taxon>Pseudomonadati</taxon>
        <taxon>Pseudomonadota</taxon>
        <taxon>Gammaproteobacteria</taxon>
        <taxon>Vibrionales</taxon>
        <taxon>Vibrionaceae</taxon>
        <taxon>Vibrio</taxon>
    </lineage>
</organism>
<proteinExistence type="inferred from homology"/>
<comment type="function">
    <text evidence="2">GTP hydrolase that promotes the GTP-dependent binding of aminoacyl-tRNA to the A-site of ribosomes during protein biosynthesis.</text>
</comment>
<comment type="catalytic activity">
    <reaction evidence="2">
        <text>GTP + H2O = GDP + phosphate + H(+)</text>
        <dbReference type="Rhea" id="RHEA:19669"/>
        <dbReference type="ChEBI" id="CHEBI:15377"/>
        <dbReference type="ChEBI" id="CHEBI:15378"/>
        <dbReference type="ChEBI" id="CHEBI:37565"/>
        <dbReference type="ChEBI" id="CHEBI:43474"/>
        <dbReference type="ChEBI" id="CHEBI:58189"/>
        <dbReference type="EC" id="3.6.5.3"/>
    </reaction>
    <physiologicalReaction direction="left-to-right" evidence="2">
        <dbReference type="Rhea" id="RHEA:19670"/>
    </physiologicalReaction>
</comment>
<comment type="subunit">
    <text evidence="2">Monomer.</text>
</comment>
<comment type="subcellular location">
    <subcellularLocation>
        <location evidence="2">Cytoplasm</location>
    </subcellularLocation>
</comment>
<comment type="similarity">
    <text evidence="2">Belongs to the TRAFAC class translation factor GTPase superfamily. Classic translation factor GTPase family. EF-Tu/EF-1A subfamily.</text>
</comment>
<sequence>MSKEKFERVKPHVNVGTIGHVDHGKTTLTAAICTTLAKVYGGAARDFASIDNAPEERERGITISTSHVEYDTPARHYAHVDCPGHADYVKNMITGAAQMDGGILVVAATDGPMPQTREHILLGRQVGIPYIIVFMNKCDMVDDEELLELVEMEVRELLSEYDFPGDDLPVIQGSALGALNGEEQWEAKIIELAEALDTYIPEPERAIDLPFLMPIEDVFSIQGRGTVVTGRIERGILKVGDEVAIVGIKDTTTTTCTGVEMFRKLLDEGRAGENVGALLRGTKRDEVERGQVLAKPGSITPHTKFESEVYVLSKDEGGRHTPFFKGYRPQFYFRTTDVTGDISLPEGVEMVMPGDNIQMVVELISPIAMDEGLRFAIREGGRTVGAGVVAKIFA</sequence>
<dbReference type="EC" id="3.6.5.3" evidence="2"/>
<dbReference type="EMBL" id="AE016795">
    <property type="protein sequence ID" value="AAO09793.1"/>
    <property type="molecule type" value="Genomic_DNA"/>
</dbReference>
<dbReference type="SMR" id="Q8DCQ7"/>
<dbReference type="KEGG" id="vvu:VV1_1339"/>
<dbReference type="HOGENOM" id="CLU_007265_0_0_6"/>
<dbReference type="Proteomes" id="UP000002275">
    <property type="component" value="Chromosome 1"/>
</dbReference>
<dbReference type="GO" id="GO:0005829">
    <property type="term" value="C:cytosol"/>
    <property type="evidence" value="ECO:0007669"/>
    <property type="project" value="TreeGrafter"/>
</dbReference>
<dbReference type="GO" id="GO:0005525">
    <property type="term" value="F:GTP binding"/>
    <property type="evidence" value="ECO:0007669"/>
    <property type="project" value="UniProtKB-UniRule"/>
</dbReference>
<dbReference type="GO" id="GO:0003924">
    <property type="term" value="F:GTPase activity"/>
    <property type="evidence" value="ECO:0007669"/>
    <property type="project" value="InterPro"/>
</dbReference>
<dbReference type="GO" id="GO:0097216">
    <property type="term" value="F:guanosine tetraphosphate binding"/>
    <property type="evidence" value="ECO:0007669"/>
    <property type="project" value="UniProtKB-ARBA"/>
</dbReference>
<dbReference type="GO" id="GO:0003746">
    <property type="term" value="F:translation elongation factor activity"/>
    <property type="evidence" value="ECO:0007669"/>
    <property type="project" value="UniProtKB-UniRule"/>
</dbReference>
<dbReference type="CDD" id="cd01884">
    <property type="entry name" value="EF_Tu"/>
    <property type="match status" value="1"/>
</dbReference>
<dbReference type="CDD" id="cd03697">
    <property type="entry name" value="EFTU_II"/>
    <property type="match status" value="1"/>
</dbReference>
<dbReference type="CDD" id="cd03707">
    <property type="entry name" value="EFTU_III"/>
    <property type="match status" value="1"/>
</dbReference>
<dbReference type="FunFam" id="2.40.30.10:FF:000001">
    <property type="entry name" value="Elongation factor Tu"/>
    <property type="match status" value="1"/>
</dbReference>
<dbReference type="FunFam" id="3.40.50.300:FF:000003">
    <property type="entry name" value="Elongation factor Tu"/>
    <property type="match status" value="1"/>
</dbReference>
<dbReference type="Gene3D" id="3.40.50.300">
    <property type="entry name" value="P-loop containing nucleotide triphosphate hydrolases"/>
    <property type="match status" value="1"/>
</dbReference>
<dbReference type="Gene3D" id="2.40.30.10">
    <property type="entry name" value="Translation factors"/>
    <property type="match status" value="2"/>
</dbReference>
<dbReference type="HAMAP" id="MF_00118_B">
    <property type="entry name" value="EF_Tu_B"/>
    <property type="match status" value="1"/>
</dbReference>
<dbReference type="InterPro" id="IPR041709">
    <property type="entry name" value="EF-Tu_GTP-bd"/>
</dbReference>
<dbReference type="InterPro" id="IPR050055">
    <property type="entry name" value="EF-Tu_GTPase"/>
</dbReference>
<dbReference type="InterPro" id="IPR004161">
    <property type="entry name" value="EFTu-like_2"/>
</dbReference>
<dbReference type="InterPro" id="IPR033720">
    <property type="entry name" value="EFTU_2"/>
</dbReference>
<dbReference type="InterPro" id="IPR031157">
    <property type="entry name" value="G_TR_CS"/>
</dbReference>
<dbReference type="InterPro" id="IPR027417">
    <property type="entry name" value="P-loop_NTPase"/>
</dbReference>
<dbReference type="InterPro" id="IPR005225">
    <property type="entry name" value="Small_GTP-bd"/>
</dbReference>
<dbReference type="InterPro" id="IPR000795">
    <property type="entry name" value="T_Tr_GTP-bd_dom"/>
</dbReference>
<dbReference type="InterPro" id="IPR009000">
    <property type="entry name" value="Transl_B-barrel_sf"/>
</dbReference>
<dbReference type="InterPro" id="IPR009001">
    <property type="entry name" value="Transl_elong_EF1A/Init_IF2_C"/>
</dbReference>
<dbReference type="InterPro" id="IPR004541">
    <property type="entry name" value="Transl_elong_EFTu/EF1A_bac/org"/>
</dbReference>
<dbReference type="InterPro" id="IPR004160">
    <property type="entry name" value="Transl_elong_EFTu/EF1A_C"/>
</dbReference>
<dbReference type="NCBIfam" id="TIGR00485">
    <property type="entry name" value="EF-Tu"/>
    <property type="match status" value="1"/>
</dbReference>
<dbReference type="NCBIfam" id="NF000766">
    <property type="entry name" value="PRK00049.1"/>
    <property type="match status" value="1"/>
</dbReference>
<dbReference type="NCBIfam" id="NF009372">
    <property type="entry name" value="PRK12735.1"/>
    <property type="match status" value="1"/>
</dbReference>
<dbReference type="NCBIfam" id="NF009373">
    <property type="entry name" value="PRK12736.1"/>
    <property type="match status" value="1"/>
</dbReference>
<dbReference type="NCBIfam" id="TIGR00231">
    <property type="entry name" value="small_GTP"/>
    <property type="match status" value="1"/>
</dbReference>
<dbReference type="PANTHER" id="PTHR43721:SF22">
    <property type="entry name" value="ELONGATION FACTOR TU, MITOCHONDRIAL"/>
    <property type="match status" value="1"/>
</dbReference>
<dbReference type="PANTHER" id="PTHR43721">
    <property type="entry name" value="ELONGATION FACTOR TU-RELATED"/>
    <property type="match status" value="1"/>
</dbReference>
<dbReference type="Pfam" id="PF00009">
    <property type="entry name" value="GTP_EFTU"/>
    <property type="match status" value="1"/>
</dbReference>
<dbReference type="Pfam" id="PF03144">
    <property type="entry name" value="GTP_EFTU_D2"/>
    <property type="match status" value="1"/>
</dbReference>
<dbReference type="Pfam" id="PF03143">
    <property type="entry name" value="GTP_EFTU_D3"/>
    <property type="match status" value="1"/>
</dbReference>
<dbReference type="PRINTS" id="PR00315">
    <property type="entry name" value="ELONGATNFCT"/>
</dbReference>
<dbReference type="SUPFAM" id="SSF50465">
    <property type="entry name" value="EF-Tu/eEF-1alpha/eIF2-gamma C-terminal domain"/>
    <property type="match status" value="1"/>
</dbReference>
<dbReference type="SUPFAM" id="SSF52540">
    <property type="entry name" value="P-loop containing nucleoside triphosphate hydrolases"/>
    <property type="match status" value="1"/>
</dbReference>
<dbReference type="SUPFAM" id="SSF50447">
    <property type="entry name" value="Translation proteins"/>
    <property type="match status" value="1"/>
</dbReference>
<dbReference type="PROSITE" id="PS00301">
    <property type="entry name" value="G_TR_1"/>
    <property type="match status" value="1"/>
</dbReference>
<dbReference type="PROSITE" id="PS51722">
    <property type="entry name" value="G_TR_2"/>
    <property type="match status" value="1"/>
</dbReference>
<accession>Q8DCQ7</accession>